<sequence>MKRMILFISCLLLIDIVVGGREGYPADSKGCKITCFLTAAGYCNTECTLKKGSSGYCAWPACYCYGLPDSVKIWTSETNKCGKK</sequence>
<proteinExistence type="evidence at protein level"/>
<name>SCX4_TITSE</name>
<protein>
    <recommendedName>
        <fullName evidence="7">Toxin Ts4</fullName>
    </recommendedName>
    <alternativeName>
        <fullName evidence="8">Non-toxic protein TsNTxP</fullName>
        <shortName evidence="8">NTxP</shortName>
    </alternativeName>
    <alternativeName>
        <fullName>P-Allerg-alpha* NaTx4.1</fullName>
    </alternativeName>
    <alternativeName>
        <fullName>PT-Immun-alpha* NaTx4.2</fullName>
    </alternativeName>
    <alternativeName>
        <fullName>Tityustoxin VI</fullName>
        <shortName>Ts VI</shortName>
        <shortName>TsTX-VI</shortName>
        <shortName>TsTXVI</shortName>
        <shortName>TsVI</shortName>
    </alternativeName>
    <alternativeName>
        <fullName>Tityustoxin-6</fullName>
        <shortName>Ts-6</shortName>
    </alternativeName>
</protein>
<accession>O77463</accession>
<accession>A0A7S8MVH0</accession>
<accession>P45669</accession>
<feature type="signal peptide" evidence="10 11">
    <location>
        <begin position="1"/>
        <end position="19"/>
    </location>
</feature>
<feature type="chain" id="PRO_0000035303" description="Toxin Ts4" evidence="3">
    <location>
        <begin position="20"/>
        <end position="81"/>
    </location>
</feature>
<feature type="propeptide" id="PRO_0000035304" evidence="10">
    <location>
        <begin position="82"/>
        <end position="84"/>
    </location>
</feature>
<feature type="domain" description="LCN-type CS-alpha/beta" evidence="2">
    <location>
        <begin position="21"/>
        <end position="82"/>
    </location>
</feature>
<feature type="modified residue" description="Cysteine amide" evidence="1">
    <location>
        <position position="81"/>
    </location>
</feature>
<feature type="disulfide bond" evidence="2">
    <location>
        <begin position="31"/>
        <end position="81"/>
    </location>
</feature>
<feature type="disulfide bond" evidence="2">
    <location>
        <begin position="35"/>
        <end position="57"/>
    </location>
</feature>
<feature type="disulfide bond" evidence="2">
    <location>
        <begin position="43"/>
        <end position="62"/>
    </location>
</feature>
<feature type="disulfide bond" evidence="2">
    <location>
        <begin position="47"/>
        <end position="64"/>
    </location>
</feature>
<feature type="sequence conflict" description="In Ref. 3; AA sequence." evidence="9" ref="3">
    <original>D</original>
    <variation>E</variation>
    <location>
        <position position="69"/>
    </location>
</feature>
<evidence type="ECO:0000250" key="1">
    <source>
        <dbReference type="UniProtKB" id="P56612"/>
    </source>
</evidence>
<evidence type="ECO:0000255" key="2">
    <source>
        <dbReference type="PROSITE-ProRule" id="PRU01210"/>
    </source>
</evidence>
<evidence type="ECO:0000269" key="3">
    <source>
    </source>
</evidence>
<evidence type="ECO:0000269" key="4">
    <source>
    </source>
</evidence>
<evidence type="ECO:0000269" key="5">
    <source>
    </source>
</evidence>
<evidence type="ECO:0000269" key="6">
    <source>
    </source>
</evidence>
<evidence type="ECO:0000303" key="7">
    <source>
    </source>
</evidence>
<evidence type="ECO:0000303" key="8">
    <source>
    </source>
</evidence>
<evidence type="ECO:0000305" key="9"/>
<evidence type="ECO:0000305" key="10">
    <source>
    </source>
</evidence>
<evidence type="ECO:0000305" key="11">
    <source>
    </source>
</evidence>
<evidence type="ECO:0000312" key="12">
    <source>
        <dbReference type="EMBL" id="AAC25688.1"/>
    </source>
</evidence>
<evidence type="ECO:0000312" key="13">
    <source>
        <dbReference type="EMBL" id="AAC25689.1"/>
    </source>
</evidence>
<evidence type="ECO:0000312" key="14">
    <source>
        <dbReference type="EMBL" id="QPD99044.1"/>
    </source>
</evidence>
<organism>
    <name type="scientific">Tityus serrulatus</name>
    <name type="common">Brazilian scorpion</name>
    <dbReference type="NCBI Taxonomy" id="6887"/>
    <lineage>
        <taxon>Eukaryota</taxon>
        <taxon>Metazoa</taxon>
        <taxon>Ecdysozoa</taxon>
        <taxon>Arthropoda</taxon>
        <taxon>Chelicerata</taxon>
        <taxon>Arachnida</taxon>
        <taxon>Scorpiones</taxon>
        <taxon>Buthida</taxon>
        <taxon>Buthoidea</taxon>
        <taxon>Buthidae</taxon>
        <taxon>Tityus</taxon>
    </lineage>
</organism>
<dbReference type="EMBL" id="AF039600">
    <property type="protein sequence ID" value="AAC25689.1"/>
    <property type="molecule type" value="Genomic_DNA"/>
</dbReference>
<dbReference type="EMBL" id="AF039599">
    <property type="protein sequence ID" value="AAC25688.1"/>
    <property type="molecule type" value="mRNA"/>
</dbReference>
<dbReference type="EMBL" id="MT450708">
    <property type="protein sequence ID" value="QPD99044.1"/>
    <property type="molecule type" value="mRNA"/>
</dbReference>
<dbReference type="PIR" id="A61484">
    <property type="entry name" value="A61484"/>
</dbReference>
<dbReference type="SMR" id="O77463"/>
<dbReference type="TCDB" id="8.B.1.1.3">
    <property type="family name" value="the long (4c-c) scorpion toxin (l-st) superfamily"/>
</dbReference>
<dbReference type="GO" id="GO:0005576">
    <property type="term" value="C:extracellular region"/>
    <property type="evidence" value="ECO:0007669"/>
    <property type="project" value="UniProtKB-SubCell"/>
</dbReference>
<dbReference type="GO" id="GO:0019871">
    <property type="term" value="F:sodium channel inhibitor activity"/>
    <property type="evidence" value="ECO:0007669"/>
    <property type="project" value="InterPro"/>
</dbReference>
<dbReference type="GO" id="GO:0090729">
    <property type="term" value="F:toxin activity"/>
    <property type="evidence" value="ECO:0007669"/>
    <property type="project" value="InterPro"/>
</dbReference>
<dbReference type="GO" id="GO:0006952">
    <property type="term" value="P:defense response"/>
    <property type="evidence" value="ECO:0007669"/>
    <property type="project" value="InterPro"/>
</dbReference>
<dbReference type="CDD" id="cd23106">
    <property type="entry name" value="neurotoxins_LC_scorpion"/>
    <property type="match status" value="1"/>
</dbReference>
<dbReference type="FunFam" id="3.30.30.10:FF:000002">
    <property type="entry name" value="Alpha-like toxin BmK-M1"/>
    <property type="match status" value="1"/>
</dbReference>
<dbReference type="Gene3D" id="3.30.30.10">
    <property type="entry name" value="Knottin, scorpion toxin-like"/>
    <property type="match status" value="1"/>
</dbReference>
<dbReference type="InterPro" id="IPR044062">
    <property type="entry name" value="LCN-type_CS_alpha_beta_dom"/>
</dbReference>
<dbReference type="InterPro" id="IPR003614">
    <property type="entry name" value="Scorpion_toxin-like"/>
</dbReference>
<dbReference type="InterPro" id="IPR036574">
    <property type="entry name" value="Scorpion_toxin-like_sf"/>
</dbReference>
<dbReference type="InterPro" id="IPR018218">
    <property type="entry name" value="Scorpion_toxinL"/>
</dbReference>
<dbReference type="InterPro" id="IPR002061">
    <property type="entry name" value="Scorpion_toxinL/defensin"/>
</dbReference>
<dbReference type="Pfam" id="PF00537">
    <property type="entry name" value="Toxin_3"/>
    <property type="match status" value="1"/>
</dbReference>
<dbReference type="PRINTS" id="PR00285">
    <property type="entry name" value="SCORPNTOXIN"/>
</dbReference>
<dbReference type="SMART" id="SM00505">
    <property type="entry name" value="Knot1"/>
    <property type="match status" value="1"/>
</dbReference>
<dbReference type="SUPFAM" id="SSF57095">
    <property type="entry name" value="Scorpion toxin-like"/>
    <property type="match status" value="1"/>
</dbReference>
<dbReference type="PROSITE" id="PS51863">
    <property type="entry name" value="LCN_CSAB"/>
    <property type="match status" value="1"/>
</dbReference>
<comment type="function">
    <text evidence="5 6">Not toxic. Induces an immune response similar to that induced by whole venom. Induces a dose dependent release of the neurotransmitters glutamic acid and gamma aminobutyric acid from rat brain synaptosomes. Thus, polyclonal antibodies raised against this protein can neutralize the effects of the venom.</text>
</comment>
<comment type="subcellular location">
    <subcellularLocation>
        <location evidence="3 4">Secreted</location>
    </subcellularLocation>
</comment>
<comment type="tissue specificity">
    <text evidence="11">Expressed by the venom gland.</text>
</comment>
<comment type="domain">
    <text evidence="9">Has the structural arrangement of an alpha-helix connected to antiparallel beta-sheets by disulfide bonds (CS-alpha/beta).</text>
</comment>
<comment type="toxic dose">
    <text evidence="3">LD(50) is 15 mg/kg by intravenous injection into mice.</text>
</comment>
<comment type="similarity">
    <text evidence="9">Belongs to the long (4 C-C) scorpion toxin superfamily. Sodium channel inhibitor family. Alpha subfamily.</text>
</comment>
<reference evidence="12 13" key="1">
    <citation type="journal article" date="1999" name="Toxicon">
        <title>Molecular cloning and genomic analysis of TsNTxp: an immunogenic protein from Tityus serrulatus scorpion venom.</title>
        <authorList>
            <person name="Guatimosim S.C."/>
            <person name="Prado V.F."/>
            <person name="Diniz C.R."/>
            <person name="Chavez-Olortegui C."/>
            <person name="Kalapothakis E."/>
        </authorList>
    </citation>
    <scope>NUCLEOTIDE SEQUENCE [GENOMIC DNA / MRNA]</scope>
</reference>
<reference evidence="14" key="2">
    <citation type="journal article" date="2021" name="Toxicon">
        <title>Novel components of Tityus serrulatus venom: a transcriptomic approach.</title>
        <authorList>
            <person name="Kalapothakis Y."/>
            <person name="Miranda K."/>
            <person name="Pereira A.H."/>
            <person name="Witt A.S.A."/>
            <person name="Marani C."/>
            <person name="Martins A.P."/>
            <person name="Leal H.G."/>
            <person name="Campos-Junior E."/>
            <person name="Pimenta A.M.C."/>
            <person name="Borges A."/>
            <person name="Chavez-Olortegui C."/>
            <person name="Kalapothakis E."/>
        </authorList>
    </citation>
    <scope>NUCLEOTIDE SEQUENCE [MRNA]</scope>
    <source>
        <tissue>Telson</tissue>
    </source>
</reference>
<reference key="3">
    <citation type="journal article" date="1990" name="J. Protein Chem.">
        <title>The complete amino acid sequence of toxin TsTX-VI isolated from the venom of the scorpion Tityus serrulatus.</title>
        <authorList>
            <person name="Marangoni S."/>
            <person name="Ghiso J."/>
            <person name="Sampaio S.V."/>
            <person name="Arantes E.C."/>
            <person name="Giglio J.R."/>
            <person name="Oliveira B."/>
            <person name="Frangione B."/>
        </authorList>
    </citation>
    <scope>PROTEIN SEQUENCE OF 20-81</scope>
    <scope>SUBCELLULAR LOCATION</scope>
    <scope>TOXIC DOSE</scope>
    <source>
        <tissue>Venom</tissue>
    </source>
</reference>
<reference key="4">
    <citation type="journal article" date="2014" name="Toxicon">
        <title>Influence of post-starvation extraction time and prey-specific diet in Tityus serrulatus scorpion venom composition and hyaluronidase activity.</title>
        <authorList>
            <person name="Pucca M.B."/>
            <person name="Amorim F.G."/>
            <person name="Cerni F.A."/>
            <person name="Bordon K.C.F."/>
            <person name="Cardoso I.A."/>
            <person name="Anjolette F.A."/>
            <person name="Arantes E.C."/>
        </authorList>
    </citation>
    <scope>PROTEIN SEQUENCE OF 20-34</scope>
    <scope>SUBCELLULAR LOCATION</scope>
    <source>
        <tissue>Venom</tissue>
    </source>
</reference>
<reference key="5">
    <citation type="journal article" date="1996" name="Biochem. Mol. Biol. Int.">
        <title>Isolation of toxin TsTX-VI from Tityus serrulatus scorpion venom. Effects on the release of neurotransmitters from synaptosomes.</title>
        <authorList>
            <person name="Sampaio S.V."/>
            <person name="Coutinho-Netto J."/>
            <person name="Arantes E.C."/>
            <person name="Marangoni S."/>
            <person name="Oliveira B."/>
            <person name="Giglio J.R."/>
        </authorList>
    </citation>
    <scope>FUNCTION</scope>
</reference>
<reference key="6">
    <citation type="journal article" date="1997" name="Toxicon">
        <title>Neutralizing capacity of antibodies elicited by a non-toxic protein purified from the venom of the scorpion Tityus serrulatus.</title>
        <authorList>
            <person name="Chavez-Olortegui C."/>
            <person name="Kalapothakis E."/>
            <person name="Ferreira A.M.B.M."/>
            <person name="Ferreira A.P."/>
            <person name="Diniz C.R."/>
        </authorList>
    </citation>
    <scope>FUNCTION</scope>
    <source>
        <tissue>Venom</tissue>
    </source>
</reference>
<reference key="7">
    <citation type="journal article" date="2009" name="Protein Pept. Lett.">
        <title>Tityus serrulatus scorpion venom and toxins: an overview.</title>
        <authorList>
            <person name="Cologna C.T."/>
            <person name="Marcussi S."/>
            <person name="Giglio J.R."/>
            <person name="Soares A.M."/>
            <person name="Arantes E.C."/>
        </authorList>
    </citation>
    <scope>NOMENCLATURE</scope>
</reference>
<reference key="8">
    <citation type="journal article" date="2012" name="PLoS ONE">
        <title>Identification and phylogenetic analysis of Tityus pachyurus and Tityus obscurus novel putative Na+-channel scorpion toxins.</title>
        <authorList>
            <person name="Guerrero-Vargas J.A."/>
            <person name="Mourao C.B."/>
            <person name="Quintero-Hernandez V."/>
            <person name="Possani L.D."/>
            <person name="Schwartz E.F."/>
        </authorList>
    </citation>
    <scope>NOMENCLATURE</scope>
</reference>
<keyword id="KW-0020">Allergen</keyword>
<keyword id="KW-0027">Amidation</keyword>
<keyword id="KW-0903">Direct protein sequencing</keyword>
<keyword id="KW-1015">Disulfide bond</keyword>
<keyword id="KW-0964">Secreted</keyword>
<keyword id="KW-0732">Signal</keyword>